<name>GALL1_DROME</name>
<proteinExistence type="evidence at protein level"/>
<evidence type="ECO:0000256" key="1">
    <source>
        <dbReference type="SAM" id="MobiDB-lite"/>
    </source>
</evidence>
<evidence type="ECO:0000269" key="2">
    <source>
    </source>
</evidence>
<evidence type="ECO:0000269" key="3">
    <source>
    </source>
</evidence>
<evidence type="ECO:0000303" key="4">
    <source>
    </source>
</evidence>
<evidence type="ECO:0000305" key="5"/>
<evidence type="ECO:0000312" key="6">
    <source>
        <dbReference type="FlyBase" id="FBgn0034543"/>
    </source>
</evidence>
<organism>
    <name type="scientific">Drosophila melanogaster</name>
    <name type="common">Fruit fly</name>
    <dbReference type="NCBI Taxonomy" id="7227"/>
    <lineage>
        <taxon>Eukaryota</taxon>
        <taxon>Metazoa</taxon>
        <taxon>Ecdysozoa</taxon>
        <taxon>Arthropoda</taxon>
        <taxon>Hexapoda</taxon>
        <taxon>Insecta</taxon>
        <taxon>Pterygota</taxon>
        <taxon>Neoptera</taxon>
        <taxon>Endopterygota</taxon>
        <taxon>Diptera</taxon>
        <taxon>Brachycera</taxon>
        <taxon>Muscomorpha</taxon>
        <taxon>Ephydroidea</taxon>
        <taxon>Drosophilidae</taxon>
        <taxon>Drosophila</taxon>
        <taxon>Sophophora</taxon>
    </lineage>
</organism>
<dbReference type="EMBL" id="AE013599">
    <property type="protein sequence ID" value="AAF57428.1"/>
    <property type="molecule type" value="Genomic_DNA"/>
</dbReference>
<dbReference type="EMBL" id="AY118612">
    <property type="protein sequence ID" value="AAM49981.1"/>
    <property type="molecule type" value="mRNA"/>
</dbReference>
<dbReference type="RefSeq" id="NP_001286642.1">
    <property type="nucleotide sequence ID" value="NM_001299713.1"/>
</dbReference>
<dbReference type="RefSeq" id="NP_001286643.1">
    <property type="nucleotide sequence ID" value="NM_001299714.1"/>
</dbReference>
<dbReference type="RefSeq" id="NP_611509.1">
    <property type="nucleotide sequence ID" value="NM_137665.2"/>
</dbReference>
<dbReference type="SMR" id="Q9V968"/>
<dbReference type="BioGRID" id="73054">
    <property type="interactions" value="5"/>
</dbReference>
<dbReference type="FunCoup" id="Q9V968">
    <property type="interactions" value="170"/>
</dbReference>
<dbReference type="IntAct" id="Q9V968">
    <property type="interactions" value="5"/>
</dbReference>
<dbReference type="STRING" id="7227.FBpp0309592"/>
<dbReference type="iPTMnet" id="Q9V968"/>
<dbReference type="PaxDb" id="7227-FBpp0085549"/>
<dbReference type="DNASU" id="246485"/>
<dbReference type="EnsemblMetazoa" id="FBtr0086236">
    <property type="protein sequence ID" value="FBpp0085549"/>
    <property type="gene ID" value="FBgn0034543"/>
</dbReference>
<dbReference type="EnsemblMetazoa" id="FBtr0342718">
    <property type="protein sequence ID" value="FBpp0309592"/>
    <property type="gene ID" value="FBgn0034543"/>
</dbReference>
<dbReference type="EnsemblMetazoa" id="FBtr0345353">
    <property type="protein sequence ID" value="FBpp0311508"/>
    <property type="gene ID" value="FBgn0034543"/>
</dbReference>
<dbReference type="GeneID" id="246485"/>
<dbReference type="KEGG" id="dme:Dmel_CG30152"/>
<dbReference type="UCSC" id="CG30152-RA">
    <property type="organism name" value="d. melanogaster"/>
</dbReference>
<dbReference type="AGR" id="FB:FBgn0034543"/>
<dbReference type="CTD" id="246485"/>
<dbReference type="FlyBase" id="FBgn0034543">
    <property type="gene designation" value="galla-1"/>
</dbReference>
<dbReference type="VEuPathDB" id="VectorBase:FBgn0034543"/>
<dbReference type="eggNOG" id="KOG3381">
    <property type="taxonomic scope" value="Eukaryota"/>
</dbReference>
<dbReference type="GeneTree" id="ENSGT00390000017697"/>
<dbReference type="InParanoid" id="Q9V968"/>
<dbReference type="OMA" id="HELGYRN"/>
<dbReference type="OrthoDB" id="2746at2759"/>
<dbReference type="PhylomeDB" id="Q9V968"/>
<dbReference type="SignaLink" id="Q9V968"/>
<dbReference type="BioGRID-ORCS" id="246485">
    <property type="hits" value="0 hits in 1 CRISPR screen"/>
</dbReference>
<dbReference type="GenomeRNAi" id="246485"/>
<dbReference type="PRO" id="PR:Q9V968"/>
<dbReference type="Proteomes" id="UP000000803">
    <property type="component" value="Chromosome 2R"/>
</dbReference>
<dbReference type="Bgee" id="FBgn0034543">
    <property type="expression patterns" value="Expressed in adult abdominal pericardial cell (Drosophila) in dorsal vessel heart and 226 other cell types or tissues"/>
</dbReference>
<dbReference type="ExpressionAtlas" id="Q9V968">
    <property type="expression patterns" value="baseline and differential"/>
</dbReference>
<dbReference type="GO" id="GO:0016324">
    <property type="term" value="C:apical plasma membrane"/>
    <property type="evidence" value="ECO:0007669"/>
    <property type="project" value="UniProtKB-SubCell"/>
</dbReference>
<dbReference type="GO" id="GO:0005737">
    <property type="term" value="C:cytoplasm"/>
    <property type="evidence" value="ECO:0007669"/>
    <property type="project" value="UniProtKB-KW"/>
</dbReference>
<dbReference type="GO" id="GO:0005876">
    <property type="term" value="C:spindle microtubule"/>
    <property type="evidence" value="ECO:0000314"/>
    <property type="project" value="FlyBase"/>
</dbReference>
<dbReference type="GO" id="GO:0051301">
    <property type="term" value="P:cell division"/>
    <property type="evidence" value="ECO:0007669"/>
    <property type="project" value="UniProtKB-KW"/>
</dbReference>
<dbReference type="GO" id="GO:0098813">
    <property type="term" value="P:nuclear chromosome segregation"/>
    <property type="evidence" value="ECO:0000315"/>
    <property type="project" value="FlyBase"/>
</dbReference>
<dbReference type="GO" id="GO:0051604">
    <property type="term" value="P:protein maturation"/>
    <property type="evidence" value="ECO:0007669"/>
    <property type="project" value="InterPro"/>
</dbReference>
<dbReference type="FunFam" id="3.30.300.130:FF:000004">
    <property type="entry name" value="cytosolic iron-sulfur assembly component 2A"/>
    <property type="match status" value="1"/>
</dbReference>
<dbReference type="Gene3D" id="6.10.250.1280">
    <property type="match status" value="1"/>
</dbReference>
<dbReference type="Gene3D" id="3.30.300.130">
    <property type="entry name" value="Fe-S cluster assembly (FSCA)"/>
    <property type="match status" value="1"/>
</dbReference>
<dbReference type="InterPro" id="IPR034904">
    <property type="entry name" value="FSCA_dom_sf"/>
</dbReference>
<dbReference type="InterPro" id="IPR039796">
    <property type="entry name" value="MIP18"/>
</dbReference>
<dbReference type="InterPro" id="IPR002744">
    <property type="entry name" value="MIP18-like"/>
</dbReference>
<dbReference type="PANTHER" id="PTHR12377:SF2">
    <property type="entry name" value="CYTOSOLIC IRON-SULFUR ASSEMBLY COMPONENT 2A"/>
    <property type="match status" value="1"/>
</dbReference>
<dbReference type="PANTHER" id="PTHR12377">
    <property type="entry name" value="CYTOSOLIC IRON-SULFUR ASSEMBLY COMPONENT 2B-RELATED"/>
    <property type="match status" value="1"/>
</dbReference>
<dbReference type="Pfam" id="PF01883">
    <property type="entry name" value="FeS_assembly_P"/>
    <property type="match status" value="1"/>
</dbReference>
<dbReference type="SUPFAM" id="SSF117916">
    <property type="entry name" value="Fe-S cluster assembly (FSCA) domain-like"/>
    <property type="match status" value="1"/>
</dbReference>
<keyword id="KW-0131">Cell cycle</keyword>
<keyword id="KW-0132">Cell division</keyword>
<keyword id="KW-1003">Cell membrane</keyword>
<keyword id="KW-0159">Chromosome partition</keyword>
<keyword id="KW-0963">Cytoplasm</keyword>
<keyword id="KW-0206">Cytoskeleton</keyword>
<keyword id="KW-0472">Membrane</keyword>
<keyword id="KW-0498">Mitosis</keyword>
<keyword id="KW-0597">Phosphoprotein</keyword>
<keyword id="KW-1185">Reference proteome</keyword>
<reference key="1">
    <citation type="journal article" date="2000" name="Science">
        <title>The genome sequence of Drosophila melanogaster.</title>
        <authorList>
            <person name="Adams M.D."/>
            <person name="Celniker S.E."/>
            <person name="Holt R.A."/>
            <person name="Evans C.A."/>
            <person name="Gocayne J.D."/>
            <person name="Amanatides P.G."/>
            <person name="Scherer S.E."/>
            <person name="Li P.W."/>
            <person name="Hoskins R.A."/>
            <person name="Galle R.F."/>
            <person name="George R.A."/>
            <person name="Lewis S.E."/>
            <person name="Richards S."/>
            <person name="Ashburner M."/>
            <person name="Henderson S.N."/>
            <person name="Sutton G.G."/>
            <person name="Wortman J.R."/>
            <person name="Yandell M.D."/>
            <person name="Zhang Q."/>
            <person name="Chen L.X."/>
            <person name="Brandon R.C."/>
            <person name="Rogers Y.-H.C."/>
            <person name="Blazej R.G."/>
            <person name="Champe M."/>
            <person name="Pfeiffer B.D."/>
            <person name="Wan K.H."/>
            <person name="Doyle C."/>
            <person name="Baxter E.G."/>
            <person name="Helt G."/>
            <person name="Nelson C.R."/>
            <person name="Miklos G.L.G."/>
            <person name="Abril J.F."/>
            <person name="Agbayani A."/>
            <person name="An H.-J."/>
            <person name="Andrews-Pfannkoch C."/>
            <person name="Baldwin D."/>
            <person name="Ballew R.M."/>
            <person name="Basu A."/>
            <person name="Baxendale J."/>
            <person name="Bayraktaroglu L."/>
            <person name="Beasley E.M."/>
            <person name="Beeson K.Y."/>
            <person name="Benos P.V."/>
            <person name="Berman B.P."/>
            <person name="Bhandari D."/>
            <person name="Bolshakov S."/>
            <person name="Borkova D."/>
            <person name="Botchan M.R."/>
            <person name="Bouck J."/>
            <person name="Brokstein P."/>
            <person name="Brottier P."/>
            <person name="Burtis K.C."/>
            <person name="Busam D.A."/>
            <person name="Butler H."/>
            <person name="Cadieu E."/>
            <person name="Center A."/>
            <person name="Chandra I."/>
            <person name="Cherry J.M."/>
            <person name="Cawley S."/>
            <person name="Dahlke C."/>
            <person name="Davenport L.B."/>
            <person name="Davies P."/>
            <person name="de Pablos B."/>
            <person name="Delcher A."/>
            <person name="Deng Z."/>
            <person name="Mays A.D."/>
            <person name="Dew I."/>
            <person name="Dietz S.M."/>
            <person name="Dodson K."/>
            <person name="Doup L.E."/>
            <person name="Downes M."/>
            <person name="Dugan-Rocha S."/>
            <person name="Dunkov B.C."/>
            <person name="Dunn P."/>
            <person name="Durbin K.J."/>
            <person name="Evangelista C.C."/>
            <person name="Ferraz C."/>
            <person name="Ferriera S."/>
            <person name="Fleischmann W."/>
            <person name="Fosler C."/>
            <person name="Gabrielian A.E."/>
            <person name="Garg N.S."/>
            <person name="Gelbart W.M."/>
            <person name="Glasser K."/>
            <person name="Glodek A."/>
            <person name="Gong F."/>
            <person name="Gorrell J.H."/>
            <person name="Gu Z."/>
            <person name="Guan P."/>
            <person name="Harris M."/>
            <person name="Harris N.L."/>
            <person name="Harvey D.A."/>
            <person name="Heiman T.J."/>
            <person name="Hernandez J.R."/>
            <person name="Houck J."/>
            <person name="Hostin D."/>
            <person name="Houston K.A."/>
            <person name="Howland T.J."/>
            <person name="Wei M.-H."/>
            <person name="Ibegwam C."/>
            <person name="Jalali M."/>
            <person name="Kalush F."/>
            <person name="Karpen G.H."/>
            <person name="Ke Z."/>
            <person name="Kennison J.A."/>
            <person name="Ketchum K.A."/>
            <person name="Kimmel B.E."/>
            <person name="Kodira C.D."/>
            <person name="Kraft C.L."/>
            <person name="Kravitz S."/>
            <person name="Kulp D."/>
            <person name="Lai Z."/>
            <person name="Lasko P."/>
            <person name="Lei Y."/>
            <person name="Levitsky A.A."/>
            <person name="Li J.H."/>
            <person name="Li Z."/>
            <person name="Liang Y."/>
            <person name="Lin X."/>
            <person name="Liu X."/>
            <person name="Mattei B."/>
            <person name="McIntosh T.C."/>
            <person name="McLeod M.P."/>
            <person name="McPherson D."/>
            <person name="Merkulov G."/>
            <person name="Milshina N.V."/>
            <person name="Mobarry C."/>
            <person name="Morris J."/>
            <person name="Moshrefi A."/>
            <person name="Mount S.M."/>
            <person name="Moy M."/>
            <person name="Murphy B."/>
            <person name="Murphy L."/>
            <person name="Muzny D.M."/>
            <person name="Nelson D.L."/>
            <person name="Nelson D.R."/>
            <person name="Nelson K.A."/>
            <person name="Nixon K."/>
            <person name="Nusskern D.R."/>
            <person name="Pacleb J.M."/>
            <person name="Palazzolo M."/>
            <person name="Pittman G.S."/>
            <person name="Pan S."/>
            <person name="Pollard J."/>
            <person name="Puri V."/>
            <person name="Reese M.G."/>
            <person name="Reinert K."/>
            <person name="Remington K."/>
            <person name="Saunders R.D.C."/>
            <person name="Scheeler F."/>
            <person name="Shen H."/>
            <person name="Shue B.C."/>
            <person name="Siden-Kiamos I."/>
            <person name="Simpson M."/>
            <person name="Skupski M.P."/>
            <person name="Smith T.J."/>
            <person name="Spier E."/>
            <person name="Spradling A.C."/>
            <person name="Stapleton M."/>
            <person name="Strong R."/>
            <person name="Sun E."/>
            <person name="Svirskas R."/>
            <person name="Tector C."/>
            <person name="Turner R."/>
            <person name="Venter E."/>
            <person name="Wang A.H."/>
            <person name="Wang X."/>
            <person name="Wang Z.-Y."/>
            <person name="Wassarman D.A."/>
            <person name="Weinstock G.M."/>
            <person name="Weissenbach J."/>
            <person name="Williams S.M."/>
            <person name="Woodage T."/>
            <person name="Worley K.C."/>
            <person name="Wu D."/>
            <person name="Yang S."/>
            <person name="Yao Q.A."/>
            <person name="Ye J."/>
            <person name="Yeh R.-F."/>
            <person name="Zaveri J.S."/>
            <person name="Zhan M."/>
            <person name="Zhang G."/>
            <person name="Zhao Q."/>
            <person name="Zheng L."/>
            <person name="Zheng X.H."/>
            <person name="Zhong F.N."/>
            <person name="Zhong W."/>
            <person name="Zhou X."/>
            <person name="Zhu S.C."/>
            <person name="Zhu X."/>
            <person name="Smith H.O."/>
            <person name="Gibbs R.A."/>
            <person name="Myers E.W."/>
            <person name="Rubin G.M."/>
            <person name="Venter J.C."/>
        </authorList>
    </citation>
    <scope>NUCLEOTIDE SEQUENCE [LARGE SCALE GENOMIC DNA]</scope>
    <source>
        <strain>Berkeley</strain>
    </source>
</reference>
<reference key="2">
    <citation type="journal article" date="2002" name="Genome Biol.">
        <title>Annotation of the Drosophila melanogaster euchromatic genome: a systematic review.</title>
        <authorList>
            <person name="Misra S."/>
            <person name="Crosby M.A."/>
            <person name="Mungall C.J."/>
            <person name="Matthews B.B."/>
            <person name="Campbell K.S."/>
            <person name="Hradecky P."/>
            <person name="Huang Y."/>
            <person name="Kaminker J.S."/>
            <person name="Millburn G.H."/>
            <person name="Prochnik S.E."/>
            <person name="Smith C.D."/>
            <person name="Tupy J.L."/>
            <person name="Whitfield E.J."/>
            <person name="Bayraktaroglu L."/>
            <person name="Berman B.P."/>
            <person name="Bettencourt B.R."/>
            <person name="Celniker S.E."/>
            <person name="de Grey A.D.N.J."/>
            <person name="Drysdale R.A."/>
            <person name="Harris N.L."/>
            <person name="Richter J."/>
            <person name="Russo S."/>
            <person name="Schroeder A.J."/>
            <person name="Shu S.Q."/>
            <person name="Stapleton M."/>
            <person name="Yamada C."/>
            <person name="Ashburner M."/>
            <person name="Gelbart W.M."/>
            <person name="Rubin G.M."/>
            <person name="Lewis S.E."/>
        </authorList>
    </citation>
    <scope>GENOME REANNOTATION</scope>
    <source>
        <strain>Berkeley</strain>
    </source>
</reference>
<reference key="3">
    <citation type="journal article" date="2002" name="Genome Biol.">
        <title>A Drosophila full-length cDNA resource.</title>
        <authorList>
            <person name="Stapleton M."/>
            <person name="Carlson J.W."/>
            <person name="Brokstein P."/>
            <person name="Yu C."/>
            <person name="Champe M."/>
            <person name="George R.A."/>
            <person name="Guarin H."/>
            <person name="Kronmiller B."/>
            <person name="Pacleb J.M."/>
            <person name="Park S."/>
            <person name="Wan K.H."/>
            <person name="Rubin G.M."/>
            <person name="Celniker S.E."/>
        </authorList>
    </citation>
    <scope>NUCLEOTIDE SEQUENCE [LARGE SCALE MRNA]</scope>
    <source>
        <strain>Berkeley</strain>
        <tissue>Larva</tissue>
        <tissue>Pupae</tissue>
    </source>
</reference>
<reference key="4">
    <citation type="journal article" date="2008" name="J. Proteome Res.">
        <title>Phosphoproteome analysis of Drosophila melanogaster embryos.</title>
        <authorList>
            <person name="Zhai B."/>
            <person name="Villen J."/>
            <person name="Beausoleil S.A."/>
            <person name="Mintseris J."/>
            <person name="Gygi S.P."/>
        </authorList>
    </citation>
    <scope>PHOSPHORYLATION [LARGE SCALE ANALYSIS] AT SER-14 AND SER-65</scope>
    <scope>IDENTIFICATION BY MASS SPECTROMETRY</scope>
    <source>
        <tissue>Embryo</tissue>
    </source>
</reference>
<reference key="5">
    <citation type="journal article" date="2015" name="Oncogene">
        <title>Crumbs interacts with Xpd for nuclear division control in Drosophila.</title>
        <authorList>
            <person name="Yeom E."/>
            <person name="Hong S.T."/>
            <person name="Choi K.W."/>
        </authorList>
    </citation>
    <scope>FUNCTION</scope>
    <scope>INTERACTION WITH THE CGX COMPLEX</scope>
    <scope>SUBCELLULAR LOCATION</scope>
    <scope>DEVELOPMENTAL STAGE</scope>
    <scope>DISRUPTION PHENOTYPE</scope>
</reference>
<accession>Q9V968</accession>
<gene>
    <name evidence="4 6" type="primary">galla-1</name>
    <name evidence="6" type="ORF">CG30152</name>
</gene>
<protein>
    <recommendedName>
        <fullName evidence="4">MIP18 family protein galla-1</fullName>
    </recommendedName>
</protein>
<feature type="chain" id="PRO_0000212695" description="MIP18 family protein galla-1">
    <location>
        <begin position="1"/>
        <end position="218"/>
    </location>
</feature>
<feature type="region of interest" description="Disordered" evidence="1">
    <location>
        <begin position="1"/>
        <end position="59"/>
    </location>
</feature>
<feature type="compositionally biased region" description="Low complexity" evidence="1">
    <location>
        <begin position="12"/>
        <end position="27"/>
    </location>
</feature>
<feature type="compositionally biased region" description="Gly residues" evidence="1">
    <location>
        <begin position="28"/>
        <end position="37"/>
    </location>
</feature>
<feature type="compositionally biased region" description="Low complexity" evidence="1">
    <location>
        <begin position="38"/>
        <end position="54"/>
    </location>
</feature>
<feature type="modified residue" description="Phosphoserine" evidence="2">
    <location>
        <position position="14"/>
    </location>
</feature>
<feature type="modified residue" description="Phosphoserine" evidence="2">
    <location>
        <position position="65"/>
    </location>
</feature>
<sequence>MLSYIKRKLSESDSGVSSVATVTSSCGGDSGRAGGTGSSESGTGSSSASISGRSQNADELVRKTSQMSMDDEAIAFGEDALLHELGYKNQTELQETIYDLLRGIRDPEKPCTLEDLNVVYEDGIFVMPPTRSNVSVVRIEFNPTVPHCSLATLIGLCIRVKVERGLPHNIKLDIYIKKGAHQTEEEINKQINDKERIAAAMENPNLRDLVENCIKDEE</sequence>
<comment type="function">
    <text evidence="3">Component of the crb-galla-Xpd (CGX) complex which is essential for proper mitotic chromosome segregation in early embryos. The CGX complex is also required for cell proliferation in developing wing disks. In the CGX complex, acts with crb to recruit Xpd thus forming the functional complex.</text>
</comment>
<comment type="subunit">
    <text evidence="3">Component of the CGX complex composed of crb, galla (galla-1 or galla-2) and Xpd. Interacts with crb (via intracellular domain). Is not able to interact with Xpd in the absence of crb.</text>
</comment>
<comment type="subcellular location">
    <subcellularLocation>
        <location evidence="3">Apical cell membrane</location>
    </subcellularLocation>
    <subcellularLocation>
        <location evidence="3">Cytoplasm</location>
        <location evidence="3">Cytoskeleton</location>
        <location evidence="3">Spindle</location>
    </subcellularLocation>
    <text evidence="3">Expressed in a punctate pattern in spindle microtubules during metaphase.</text>
</comment>
<comment type="developmental stage">
    <text evidence="3">Expressed at low levels during larval stages, and at higher levels in pupae and adults (at protein level). Ubiquitously expressed in the wing disk (at protein level).</text>
</comment>
<comment type="disruption phenotype">
    <text evidence="3">Mutant flies show temperature-sensitive lethality. Prior to cellularization many embryos display signs of incomplete chromosome segregation during mitotic divisions likely due to defective organization of spindle microtubules.</text>
</comment>
<comment type="miscellaneous">
    <text evidence="4">The name 'galla' means splitting in Korean and is derived from its role in chromosome segregation.</text>
</comment>
<comment type="similarity">
    <text evidence="5">Belongs to the MIP18 family.</text>
</comment>